<dbReference type="EMBL" id="AP006715">
    <property type="protein sequence ID" value="BAE92479.1"/>
    <property type="molecule type" value="Genomic_DNA"/>
</dbReference>
<dbReference type="RefSeq" id="YP_537036.1">
    <property type="nucleotide sequence ID" value="NC_007932.1"/>
</dbReference>
<dbReference type="SMR" id="Q1XDD2"/>
<dbReference type="GO" id="GO:0009507">
    <property type="term" value="C:chloroplast"/>
    <property type="evidence" value="ECO:0007669"/>
    <property type="project" value="UniProtKB-SubCell"/>
</dbReference>
<dbReference type="GO" id="GO:0016168">
    <property type="term" value="F:chlorophyll binding"/>
    <property type="evidence" value="ECO:0007669"/>
    <property type="project" value="UniProtKB-KW"/>
</dbReference>
<dbReference type="Gene3D" id="1.10.3460.10">
    <property type="entry name" value="Chlorophyll a/b binding protein domain"/>
    <property type="match status" value="1"/>
</dbReference>
<dbReference type="SUPFAM" id="SSF103511">
    <property type="entry name" value="Chlorophyll a-b binding protein"/>
    <property type="match status" value="1"/>
</dbReference>
<organism>
    <name type="scientific">Pyropia yezoensis</name>
    <name type="common">Susabi-nori</name>
    <name type="synonym">Porphyra yezoensis</name>
    <dbReference type="NCBI Taxonomy" id="2788"/>
    <lineage>
        <taxon>Eukaryota</taxon>
        <taxon>Rhodophyta</taxon>
        <taxon>Bangiophyceae</taxon>
        <taxon>Bangiales</taxon>
        <taxon>Bangiaceae</taxon>
        <taxon>Pyropia</taxon>
    </lineage>
</organism>
<keyword id="KW-0148">Chlorophyll</keyword>
<keyword id="KW-0150">Chloroplast</keyword>
<keyword id="KW-0157">Chromophore</keyword>
<keyword id="KW-0934">Plastid</keyword>
<proteinExistence type="inferred from homology"/>
<comment type="function">
    <text>Possible role in chlorophyll and/or carotenoid binding.</text>
</comment>
<comment type="subcellular location">
    <subcellularLocation>
        <location>Plastid</location>
        <location>Chloroplast</location>
    </subcellularLocation>
</comment>
<comment type="similarity">
    <text evidence="1">Belongs to the ELIP/psbS family.</text>
</comment>
<reference key="1">
    <citation type="submission" date="2003-11" db="EMBL/GenBank/DDBJ databases">
        <title>Whole genome sequence of Porphyra yezoensis chloroplast.</title>
        <authorList>
            <person name="Kunimoto M."/>
            <person name="Morishima K."/>
            <person name="Yoshikawa M."/>
            <person name="Fukuda S."/>
            <person name="Kobayashi T."/>
            <person name="Kobayashi M."/>
            <person name="Okazaki T."/>
            <person name="Ohara I."/>
            <person name="Nakayama I."/>
        </authorList>
    </citation>
    <scope>NUCLEOTIDE SEQUENCE [LARGE SCALE GENOMIC DNA]</scope>
    <source>
        <strain>U-51</strain>
    </source>
</reference>
<feature type="chain" id="PRO_0000277313" description="Uncharacterized protein Ycf17">
    <location>
        <begin position="1"/>
        <end position="48"/>
    </location>
</feature>
<accession>Q1XDD2</accession>
<evidence type="ECO:0000305" key="1"/>
<geneLocation type="chloroplast"/>
<name>YCF17_PYRYE</name>
<protein>
    <recommendedName>
        <fullName>Uncharacterized protein Ycf17</fullName>
    </recommendedName>
</protein>
<sequence>MKKSLWLWGFTDSAETWNGRFAMIGFISVIFIEVVTGQGLLYLIGMMS</sequence>
<gene>
    <name type="primary">ycf17</name>
</gene>